<sequence length="499" mass="57348">MAAPEPAPRRGREREREDESEDESDILEESPCGRWQKRREQVNQGNMPGIQSTFLAMDTEEGVEVVWNELHFGDRKAFAAHEEKIQTMFEQLALVDHPNIVKLHKYWLDASEARARVIFITEYVSSGSLKQFLKKTKKNHKAMNARAWKRWCTQILSALSFLHACSPPIIHGNLTSDTIFIQHNGLIKIGSVWYRIFSNALPDDLRSPIRAEREELRNLHFFPPEYGEVNDGTAVDIFSFGMCALEMAVLEIQANGDTRVTEEAIARARHSLSDPNMREFILSCLARDPARRPSAHNLLFHRVLFEVHSLKLLAAHCFIQHQYLMPENVVEEKTKAMDLHAVLAEMPQPHGPPMQWRYSEVSFLELDKFLEDVRNGIYPLMNFAAARPLGLPRVLAPPPEEAQKAKTPTPEPFDSETRKVVQMQCNLERSEDKARWHLTLLLVLEDRLHRQLTYDLLPTDSAQDLAAELVHYGFLHEDDRTKLAAFLETTFLKYRGTQA</sequence>
<feature type="chain" id="PRO_0000225609" description="Nuclear receptor-binding protein 2">
    <location>
        <begin position="1"/>
        <end position="499"/>
    </location>
</feature>
<feature type="domain" description="Protein kinase" evidence="1">
    <location>
        <begin position="36"/>
        <end position="304"/>
    </location>
</feature>
<feature type="region of interest" description="Disordered" evidence="2">
    <location>
        <begin position="1"/>
        <end position="31"/>
    </location>
</feature>
<feature type="region of interest" description="Disordered" evidence="2">
    <location>
        <begin position="396"/>
        <end position="416"/>
    </location>
</feature>
<feature type="compositionally biased region" description="Basic and acidic residues" evidence="2">
    <location>
        <begin position="7"/>
        <end position="17"/>
    </location>
</feature>
<feature type="compositionally biased region" description="Acidic residues" evidence="2">
    <location>
        <begin position="18"/>
        <end position="28"/>
    </location>
</feature>
<feature type="modified residue" description="Phosphothreonine" evidence="8">
    <location>
        <position position="407"/>
    </location>
</feature>
<feature type="modified residue" description="Phosphothreonine" evidence="8">
    <location>
        <position position="409"/>
    </location>
</feature>
<feature type="sequence conflict" description="In Ref. 2; AAH11468." evidence="4" ref="2">
    <original>A</original>
    <variation>V</variation>
    <location>
        <position position="200"/>
    </location>
</feature>
<accession>Q91V36</accession>
<accession>Q8R3M0</accession>
<gene>
    <name evidence="6 7" type="primary">Nrbp2</name>
</gene>
<proteinExistence type="evidence at protein level"/>
<dbReference type="EMBL" id="AC116487">
    <property type="status" value="NOT_ANNOTATED_CDS"/>
    <property type="molecule type" value="Genomic_DNA"/>
</dbReference>
<dbReference type="EMBL" id="BC011468">
    <property type="protein sequence ID" value="AAH11468.1"/>
    <property type="status" value="ALT_INIT"/>
    <property type="molecule type" value="mRNA"/>
</dbReference>
<dbReference type="EMBL" id="BC012437">
    <property type="protein sequence ID" value="AAH12437.1"/>
    <property type="status" value="ALT_INIT"/>
    <property type="molecule type" value="mRNA"/>
</dbReference>
<dbReference type="EMBL" id="BC025042">
    <property type="protein sequence ID" value="AAH25042.1"/>
    <property type="molecule type" value="mRNA"/>
</dbReference>
<dbReference type="CCDS" id="CCDS27561.2"/>
<dbReference type="RefSeq" id="NP_001345288.1">
    <property type="nucleotide sequence ID" value="NM_001358359.1"/>
</dbReference>
<dbReference type="RefSeq" id="NP_659096.1">
    <property type="nucleotide sequence ID" value="NM_144847.1"/>
</dbReference>
<dbReference type="RefSeq" id="XP_006520835.1">
    <property type="nucleotide sequence ID" value="XM_006520772.3"/>
</dbReference>
<dbReference type="SMR" id="Q91V36"/>
<dbReference type="FunCoup" id="Q91V36">
    <property type="interactions" value="1545"/>
</dbReference>
<dbReference type="STRING" id="10090.ENSMUSP00000019516"/>
<dbReference type="GlyGen" id="Q91V36">
    <property type="glycosylation" value="1 site"/>
</dbReference>
<dbReference type="iPTMnet" id="Q91V36"/>
<dbReference type="PhosphoSitePlus" id="Q91V36"/>
<dbReference type="jPOST" id="Q91V36"/>
<dbReference type="PaxDb" id="10090-ENSMUSP00000019516"/>
<dbReference type="PeptideAtlas" id="Q91V36"/>
<dbReference type="ProteomicsDB" id="293727"/>
<dbReference type="Pumba" id="Q91V36"/>
<dbReference type="Antibodypedia" id="28122">
    <property type="antibodies" value="195 antibodies from 25 providers"/>
</dbReference>
<dbReference type="DNASU" id="223649"/>
<dbReference type="Ensembl" id="ENSMUST00000228366.3">
    <property type="protein sequence ID" value="ENSMUSP00000154287.2"/>
    <property type="gene ID" value="ENSMUSG00000075590.5"/>
</dbReference>
<dbReference type="GeneID" id="223649"/>
<dbReference type="UCSC" id="uc007wil.1">
    <property type="organism name" value="mouse"/>
</dbReference>
<dbReference type="AGR" id="MGI:2385017"/>
<dbReference type="MGI" id="MGI:2385017">
    <property type="gene designation" value="Nrbp2"/>
</dbReference>
<dbReference type="VEuPathDB" id="HostDB:ENSMUSG00000075590"/>
<dbReference type="eggNOG" id="KOG1266">
    <property type="taxonomic scope" value="Eukaryota"/>
</dbReference>
<dbReference type="GeneTree" id="ENSGT00940000160430"/>
<dbReference type="InParanoid" id="Q91V36"/>
<dbReference type="OMA" id="MNFACAR"/>
<dbReference type="OrthoDB" id="1034557at2759"/>
<dbReference type="PhylomeDB" id="Q91V36"/>
<dbReference type="BioGRID-ORCS" id="223649">
    <property type="hits" value="4 hits in 80 CRISPR screens"/>
</dbReference>
<dbReference type="ChiTaRS" id="Nrbp2">
    <property type="organism name" value="mouse"/>
</dbReference>
<dbReference type="PRO" id="PR:Q91V36"/>
<dbReference type="Proteomes" id="UP000000589">
    <property type="component" value="Chromosome 15"/>
</dbReference>
<dbReference type="RNAct" id="Q91V36">
    <property type="molecule type" value="protein"/>
</dbReference>
<dbReference type="Bgee" id="ENSMUSG00000075590">
    <property type="expression patterns" value="Expressed in superior frontal gyrus and 208 other cell types or tissues"/>
</dbReference>
<dbReference type="ExpressionAtlas" id="Q91V36">
    <property type="expression patterns" value="baseline and differential"/>
</dbReference>
<dbReference type="GO" id="GO:0005737">
    <property type="term" value="C:cytoplasm"/>
    <property type="evidence" value="ECO:0000314"/>
    <property type="project" value="UniProtKB"/>
</dbReference>
<dbReference type="GO" id="GO:0005524">
    <property type="term" value="F:ATP binding"/>
    <property type="evidence" value="ECO:0007669"/>
    <property type="project" value="InterPro"/>
</dbReference>
<dbReference type="GO" id="GO:0004672">
    <property type="term" value="F:protein kinase activity"/>
    <property type="evidence" value="ECO:0007669"/>
    <property type="project" value="InterPro"/>
</dbReference>
<dbReference type="GO" id="GO:0016242">
    <property type="term" value="P:negative regulation of macroautophagy"/>
    <property type="evidence" value="ECO:0007669"/>
    <property type="project" value="Ensembl"/>
</dbReference>
<dbReference type="GO" id="GO:0043524">
    <property type="term" value="P:negative regulation of neuron apoptotic process"/>
    <property type="evidence" value="ECO:0000315"/>
    <property type="project" value="UniProtKB"/>
</dbReference>
<dbReference type="GO" id="GO:0030182">
    <property type="term" value="P:neuron differentiation"/>
    <property type="evidence" value="ECO:0000270"/>
    <property type="project" value="UniProtKB"/>
</dbReference>
<dbReference type="CDD" id="cd14035">
    <property type="entry name" value="PK_MADML"/>
    <property type="match status" value="1"/>
</dbReference>
<dbReference type="FunFam" id="3.30.200.20:FF:000098">
    <property type="entry name" value="Nuclear receptor-binding protein 1"/>
    <property type="match status" value="1"/>
</dbReference>
<dbReference type="FunFam" id="1.10.510.10:FF:000266">
    <property type="entry name" value="nuclear receptor-binding protein 2"/>
    <property type="match status" value="1"/>
</dbReference>
<dbReference type="Gene3D" id="3.30.200.20">
    <property type="entry name" value="Phosphorylase Kinase, domain 1"/>
    <property type="match status" value="1"/>
</dbReference>
<dbReference type="Gene3D" id="1.10.510.10">
    <property type="entry name" value="Transferase(Phosphotransferase) domain 1"/>
    <property type="match status" value="1"/>
</dbReference>
<dbReference type="InterPro" id="IPR011009">
    <property type="entry name" value="Kinase-like_dom_sf"/>
</dbReference>
<dbReference type="InterPro" id="IPR042697">
    <property type="entry name" value="NRBP2_PK"/>
</dbReference>
<dbReference type="InterPro" id="IPR000719">
    <property type="entry name" value="Prot_kinase_dom"/>
</dbReference>
<dbReference type="InterPro" id="IPR050588">
    <property type="entry name" value="WNK_Ser-Thr_kinase"/>
</dbReference>
<dbReference type="PANTHER" id="PTHR13902">
    <property type="entry name" value="SERINE/THREONINE-PROTEIN KINASE WNK WITH NO LYSINE -RELATED"/>
    <property type="match status" value="1"/>
</dbReference>
<dbReference type="Pfam" id="PF00069">
    <property type="entry name" value="Pkinase"/>
    <property type="match status" value="1"/>
</dbReference>
<dbReference type="SUPFAM" id="SSF56112">
    <property type="entry name" value="Protein kinase-like (PK-like)"/>
    <property type="match status" value="1"/>
</dbReference>
<dbReference type="PROSITE" id="PS50011">
    <property type="entry name" value="PROTEIN_KINASE_DOM"/>
    <property type="match status" value="1"/>
</dbReference>
<keyword id="KW-0963">Cytoplasm</keyword>
<keyword id="KW-0524">Neurogenesis</keyword>
<keyword id="KW-0597">Phosphoprotein</keyword>
<keyword id="KW-1185">Reference proteome</keyword>
<protein>
    <recommendedName>
        <fullName>Nuclear receptor-binding protein 2</fullName>
    </recommendedName>
</protein>
<evidence type="ECO:0000255" key="1">
    <source>
        <dbReference type="PROSITE-ProRule" id="PRU00159"/>
    </source>
</evidence>
<evidence type="ECO:0000256" key="2">
    <source>
        <dbReference type="SAM" id="MobiDB-lite"/>
    </source>
</evidence>
<evidence type="ECO:0000269" key="3">
    <source>
    </source>
</evidence>
<evidence type="ECO:0000305" key="4"/>
<evidence type="ECO:0000312" key="5">
    <source>
        <dbReference type="EMBL" id="AAH11468.1"/>
    </source>
</evidence>
<evidence type="ECO:0000312" key="6">
    <source>
        <dbReference type="EMBL" id="AAH12437.1"/>
    </source>
</evidence>
<evidence type="ECO:0000312" key="7">
    <source>
        <dbReference type="MGI" id="MGI:2385017"/>
    </source>
</evidence>
<evidence type="ECO:0007744" key="8">
    <source>
    </source>
</evidence>
<reference key="1">
    <citation type="journal article" date="2009" name="PLoS Biol.">
        <title>Lineage-specific biology revealed by a finished genome assembly of the mouse.</title>
        <authorList>
            <person name="Church D.M."/>
            <person name="Goodstadt L."/>
            <person name="Hillier L.W."/>
            <person name="Zody M.C."/>
            <person name="Goldstein S."/>
            <person name="She X."/>
            <person name="Bult C.J."/>
            <person name="Agarwala R."/>
            <person name="Cherry J.L."/>
            <person name="DiCuccio M."/>
            <person name="Hlavina W."/>
            <person name="Kapustin Y."/>
            <person name="Meric P."/>
            <person name="Maglott D."/>
            <person name="Birtle Z."/>
            <person name="Marques A.C."/>
            <person name="Graves T."/>
            <person name="Zhou S."/>
            <person name="Teague B."/>
            <person name="Potamousis K."/>
            <person name="Churas C."/>
            <person name="Place M."/>
            <person name="Herschleb J."/>
            <person name="Runnheim R."/>
            <person name="Forrest D."/>
            <person name="Amos-Landgraf J."/>
            <person name="Schwartz D.C."/>
            <person name="Cheng Z."/>
            <person name="Lindblad-Toh K."/>
            <person name="Eichler E.E."/>
            <person name="Ponting C.P."/>
        </authorList>
    </citation>
    <scope>NUCLEOTIDE SEQUENCE [LARGE SCALE GENOMIC DNA]</scope>
    <source>
        <strain>C57BL/6J</strain>
    </source>
</reference>
<reference evidence="6" key="2">
    <citation type="journal article" date="2004" name="Genome Res.">
        <title>The status, quality, and expansion of the NIH full-length cDNA project: the Mammalian Gene Collection (MGC).</title>
        <authorList>
            <consortium name="The MGC Project Team"/>
        </authorList>
    </citation>
    <scope>NUCLEOTIDE SEQUENCE [LARGE SCALE MRNA] OF 191-499</scope>
    <source>
        <strain evidence="5">Czech II</strain>
        <strain evidence="6">FVB/N</strain>
        <tissue evidence="6">Mammary gland</tissue>
    </source>
</reference>
<reference key="3">
    <citation type="journal article" date="2008" name="Mol. Cell. Neurosci.">
        <title>Nuclear receptor binding protein 2 is induced during neural progenitor differentiation and affects cell survival.</title>
        <authorList>
            <person name="Larsson J."/>
            <person name="Forsberg M."/>
            <person name="Brannvall K."/>
            <person name="Zhang X.Q."/>
            <person name="Enarsson M."/>
            <person name="Hedborg F."/>
            <person name="Forsberg-Nilsson K."/>
        </authorList>
    </citation>
    <scope>FUNCTION</scope>
    <scope>SUBCELLULAR LOCATION</scope>
    <scope>TISSUE SPECIFICITY</scope>
    <scope>DEVELOPMENTAL STAGE</scope>
</reference>
<reference key="4">
    <citation type="journal article" date="2010" name="Cell">
        <title>A tissue-specific atlas of mouse protein phosphorylation and expression.</title>
        <authorList>
            <person name="Huttlin E.L."/>
            <person name="Jedrychowski M.P."/>
            <person name="Elias J.E."/>
            <person name="Goswami T."/>
            <person name="Rad R."/>
            <person name="Beausoleil S.A."/>
            <person name="Villen J."/>
            <person name="Haas W."/>
            <person name="Sowa M.E."/>
            <person name="Gygi S.P."/>
        </authorList>
    </citation>
    <scope>PHOSPHORYLATION [LARGE SCALE ANALYSIS] AT THR-407 AND THR-409</scope>
    <scope>IDENTIFICATION BY MASS SPECTROMETRY [LARGE SCALE ANALYSIS]</scope>
    <source>
        <tissue>Brain</tissue>
        <tissue>Lung</tissue>
        <tissue>Testis</tissue>
    </source>
</reference>
<comment type="function">
    <text evidence="3">May regulate apoptosis of neural progenitor cells during their differentiation.</text>
</comment>
<comment type="subcellular location">
    <subcellularLocation>
        <location evidence="3">Cytoplasm</location>
    </subcellularLocation>
</comment>
<comment type="tissue specificity">
    <text evidence="3">Expressed in Purkinje cells of the cerebellum and neurons in the CA3 region of the hippocampus. Also detected in non-neural tissues including mesenchymal layer adjacent to epithelium in developing bronchi of the lung, the epithelium of the stomach as well as cells in the liver.</text>
</comment>
<comment type="developmental stage">
    <text evidence="3">Expressed in the cerebral cortex at 14 dpc (at protein level). Expressed in the walls of the third and fourth ventricles, and in the hippocampus during development.</text>
</comment>
<comment type="domain">
    <text>The protein kinase domain is predicted to be catalytically inactive.</text>
</comment>
<comment type="similarity">
    <text evidence="1">Belongs to the protein kinase superfamily. Ser/Thr protein kinase family.</text>
</comment>
<comment type="sequence caution" evidence="4">
    <conflict type="erroneous initiation">
        <sequence resource="EMBL-CDS" id="AAH11468"/>
    </conflict>
    <text>Extended N-terminus.</text>
</comment>
<comment type="sequence caution" evidence="4">
    <conflict type="erroneous initiation">
        <sequence resource="EMBL-CDS" id="AAH12437"/>
    </conflict>
    <text>Extended N-terminus.</text>
</comment>
<name>NRBP2_MOUSE</name>
<organism>
    <name type="scientific">Mus musculus</name>
    <name type="common">Mouse</name>
    <dbReference type="NCBI Taxonomy" id="10090"/>
    <lineage>
        <taxon>Eukaryota</taxon>
        <taxon>Metazoa</taxon>
        <taxon>Chordata</taxon>
        <taxon>Craniata</taxon>
        <taxon>Vertebrata</taxon>
        <taxon>Euteleostomi</taxon>
        <taxon>Mammalia</taxon>
        <taxon>Eutheria</taxon>
        <taxon>Euarchontoglires</taxon>
        <taxon>Glires</taxon>
        <taxon>Rodentia</taxon>
        <taxon>Myomorpha</taxon>
        <taxon>Muroidea</taxon>
        <taxon>Muridae</taxon>
        <taxon>Murinae</taxon>
        <taxon>Mus</taxon>
        <taxon>Mus</taxon>
    </lineage>
</organism>